<feature type="signal peptide" evidence="1">
    <location>
        <begin position="1"/>
        <end position="16"/>
    </location>
</feature>
<feature type="chain" id="PRO_0000021361" description="Platelet glycoprotein V">
    <location>
        <begin position="17"/>
        <end position="560"/>
    </location>
</feature>
<feature type="topological domain" description="Extracellular" evidence="1">
    <location>
        <begin position="17"/>
        <end position="523"/>
    </location>
</feature>
<feature type="transmembrane region" description="Helical" evidence="1">
    <location>
        <begin position="524"/>
        <end position="544"/>
    </location>
</feature>
<feature type="topological domain" description="Cytoplasmic" evidence="1">
    <location>
        <begin position="545"/>
        <end position="560"/>
    </location>
</feature>
<feature type="domain" description="LRRNT">
    <location>
        <begin position="17"/>
        <end position="50"/>
    </location>
</feature>
<feature type="repeat" description="LRR 1">
    <location>
        <begin position="75"/>
        <end position="96"/>
    </location>
</feature>
<feature type="repeat" description="LRR 2">
    <location>
        <begin position="99"/>
        <end position="120"/>
    </location>
</feature>
<feature type="repeat" description="LRR 3">
    <location>
        <begin position="123"/>
        <end position="144"/>
    </location>
</feature>
<feature type="repeat" description="LRR 4">
    <location>
        <begin position="147"/>
        <end position="168"/>
    </location>
</feature>
<feature type="repeat" description="LRR 5">
    <location>
        <begin position="171"/>
        <end position="193"/>
    </location>
</feature>
<feature type="repeat" description="LRR 6">
    <location>
        <begin position="195"/>
        <end position="216"/>
    </location>
</feature>
<feature type="repeat" description="LRR 7">
    <location>
        <begin position="219"/>
        <end position="240"/>
    </location>
</feature>
<feature type="repeat" description="LRR 8">
    <location>
        <begin position="243"/>
        <end position="264"/>
    </location>
</feature>
<feature type="repeat" description="LRR 9">
    <location>
        <begin position="267"/>
        <end position="288"/>
    </location>
</feature>
<feature type="repeat" description="LRR 10">
    <location>
        <begin position="291"/>
        <end position="312"/>
    </location>
</feature>
<feature type="repeat" description="LRR 11">
    <location>
        <begin position="340"/>
        <end position="361"/>
    </location>
</feature>
<feature type="repeat" description="LRR 12">
    <location>
        <begin position="364"/>
        <end position="385"/>
    </location>
</feature>
<feature type="repeat" description="LRR 13">
    <location>
        <begin position="388"/>
        <end position="409"/>
    </location>
</feature>
<feature type="domain" description="LRRCT">
    <location>
        <begin position="421"/>
        <end position="474"/>
    </location>
</feature>
<feature type="region of interest" description="Disordered" evidence="2">
    <location>
        <begin position="469"/>
        <end position="498"/>
    </location>
</feature>
<feature type="glycosylation site" description="N-linked (GlcNAc...) asparagine">
    <location>
        <position position="51"/>
    </location>
</feature>
<feature type="glycosylation site" description="N-linked (GlcNAc...) (complex) asparagine" evidence="3 4">
    <location>
        <position position="181"/>
    </location>
</feature>
<feature type="glycosylation site" description="N-linked (GlcNAc...) (complex) asparagine" evidence="4">
    <location>
        <position position="243"/>
    </location>
</feature>
<feature type="glycosylation site" description="N-linked (GlcNAc...) asparagine" evidence="1">
    <location>
        <position position="267"/>
    </location>
</feature>
<feature type="glycosylation site" description="N-linked (GlcNAc...) asparagine">
    <location>
        <position position="298"/>
    </location>
</feature>
<feature type="glycosylation site" description="N-linked (GlcNAc...) asparagine">
    <location>
        <position position="312"/>
    </location>
</feature>
<feature type="glycosylation site" description="N-linked (GlcNAc...) asparagine">
    <location>
        <position position="385"/>
    </location>
</feature>
<feature type="glycosylation site" description="N-linked (GlcNAc...) asparagine" evidence="1">
    <location>
        <position position="499"/>
    </location>
</feature>
<feature type="sequence conflict" description="In Ref. 5; AA sequence." evidence="5" ref="5">
    <original>D</original>
    <variation>W</variation>
    <location>
        <position position="130"/>
    </location>
</feature>
<feature type="sequence conflict" description="In Ref. 5; AA sequence." evidence="5" ref="5">
    <original>GID</original>
    <variation>PGG</variation>
    <location>
        <begin position="136"/>
        <end position="138"/>
    </location>
</feature>
<feature type="sequence conflict" description="In Ref. 5; AA sequence." evidence="5" ref="5">
    <original>N</original>
    <variation>H</variation>
    <location>
        <position position="267"/>
    </location>
</feature>
<accession>P40197</accession>
<accession>D1MER9</accession>
<protein>
    <recommendedName>
        <fullName>Platelet glycoprotein V</fullName>
        <shortName>GPV</shortName>
    </recommendedName>
    <alternativeName>
        <fullName>Glycoprotein 5</fullName>
    </alternativeName>
    <cdAntigenName>CD42d</cdAntigenName>
</protein>
<name>GPV_HUMAN</name>
<gene>
    <name type="primary">GP5</name>
</gene>
<reference key="1">
    <citation type="journal article" date="1993" name="Proc. Natl. Acad. Sci. U.S.A.">
        <title>Human platelet glycoprotein V: characterization of the polypeptide and the related Ib-V-IX receptor system of adhesive, leucine-rich glycoproteins.</title>
        <authorList>
            <person name="Hickey M.J."/>
            <person name="Hagen F.S."/>
            <person name="Yagi M."/>
            <person name="Roth G.J."/>
        </authorList>
    </citation>
    <scope>NUCLEOTIDE SEQUENCE [MRNA]</scope>
    <source>
        <tissue>Lung</tissue>
    </source>
</reference>
<reference key="2">
    <citation type="journal article" date="1993" name="J. Biol. Chem.">
        <title>Cloning and characterization of the gene encoding the human platelet glycoprotein V. A member of the leucine-rich glycoprotein family cleaved during thrombin-induced platelet activation.</title>
        <authorList>
            <person name="Lanza F."/>
            <person name="Morales M."/>
            <person name="de la Salle C."/>
            <person name="Cazenave J.-P."/>
            <person name="Clemetson K.J."/>
            <person name="Shimomura T."/>
            <person name="Phillips D.R."/>
        </authorList>
    </citation>
    <scope>NUCLEOTIDE SEQUENCE [GENOMIC DNA]</scope>
    <source>
        <tissue>Platelet</tissue>
    </source>
</reference>
<reference key="3">
    <citation type="submission" date="2009-10" db="EMBL/GenBank/DDBJ databases">
        <title>Single novel mutation in transmembrane region of glycoprotein IX affects platelet surface expressions of glycoprotein GP-Ib-IX complex and causes Bernard Soulier syndrome.</title>
        <authorList>
            <person name="Xu L."/>
            <person name="Liu L."/>
            <person name="Zhang D."/>
            <person name="Sun G."/>
            <person name="Wang P."/>
            <person name="Sun N."/>
            <person name="Hu Q."/>
            <person name="Li X."/>
            <person name="Cao F."/>
            <person name="Peng B."/>
            <person name="Yu S."/>
        </authorList>
    </citation>
    <scope>NUCLEOTIDE SEQUENCE [GENOMIC DNA]</scope>
</reference>
<reference key="4">
    <citation type="submission" date="2005-09" db="EMBL/GenBank/DDBJ databases">
        <authorList>
            <person name="Mural R.J."/>
            <person name="Istrail S."/>
            <person name="Sutton G."/>
            <person name="Florea L."/>
            <person name="Halpern A.L."/>
            <person name="Mobarry C.M."/>
            <person name="Lippert R."/>
            <person name="Walenz B."/>
            <person name="Shatkay H."/>
            <person name="Dew I."/>
            <person name="Miller J.R."/>
            <person name="Flanigan M.J."/>
            <person name="Edwards N.J."/>
            <person name="Bolanos R."/>
            <person name="Fasulo D."/>
            <person name="Halldorsson B.V."/>
            <person name="Hannenhalli S."/>
            <person name="Turner R."/>
            <person name="Yooseph S."/>
            <person name="Lu F."/>
            <person name="Nusskern D.R."/>
            <person name="Shue B.C."/>
            <person name="Zheng X.H."/>
            <person name="Zhong F."/>
            <person name="Delcher A.L."/>
            <person name="Huson D.H."/>
            <person name="Kravitz S.A."/>
            <person name="Mouchard L."/>
            <person name="Reinert K."/>
            <person name="Remington K.A."/>
            <person name="Clark A.G."/>
            <person name="Waterman M.S."/>
            <person name="Eichler E.E."/>
            <person name="Adams M.D."/>
            <person name="Hunkapiller M.W."/>
            <person name="Myers E.W."/>
            <person name="Venter J.C."/>
        </authorList>
    </citation>
    <scope>NUCLEOTIDE SEQUENCE [LARGE SCALE GENOMIC DNA]</scope>
</reference>
<reference key="5">
    <citation type="journal article" date="1990" name="Blood">
        <title>Rapid purification and characterization of human platelet glycoprotein V: the amino acid sequence contains leucine-rich repetitive modules as in glycoprotein Ib.</title>
        <authorList>
            <person name="Shimomura T."/>
            <person name="Fujimura K."/>
            <person name="Maehama S."/>
            <person name="Takemoto M."/>
            <person name="Oda K."/>
            <person name="Fujimoto T."/>
            <person name="Oyama R."/>
            <person name="Suzuki M."/>
            <person name="Icihara-Tanaka K."/>
            <person name="Titani K."/>
            <person name="Kuramoto A."/>
        </authorList>
    </citation>
    <scope>PARTIAL PROTEIN SEQUENCE</scope>
    <source>
        <tissue>Platelet</tissue>
    </source>
</reference>
<reference key="6">
    <citation type="journal article" date="1990" name="Biochem. Biophys. Res. Commun.">
        <title>Human platelet glycoprotein V: a surface leucine-rich glycoprotein related to adhesion.</title>
        <authorList>
            <person name="Roth G.J."/>
            <person name="Church T.A."/>
            <person name="McMullen B.A."/>
            <person name="Williams S.A."/>
        </authorList>
    </citation>
    <scope>PARTIAL PROTEIN SEQUENCE</scope>
    <source>
        <tissue>Platelet</tissue>
    </source>
</reference>
<reference key="7">
    <citation type="journal article" date="2006" name="Mol. Cell. Proteomics">
        <title>Elucidation of N-glycosylation sites on human platelet proteins: a glycoproteomic approach.</title>
        <authorList>
            <person name="Lewandrowski U."/>
            <person name="Moebius J."/>
            <person name="Walter U."/>
            <person name="Sickmann A."/>
        </authorList>
    </citation>
    <scope>GLYCOSYLATION [LARGE SCALE ANALYSIS] AT ASN-181</scope>
    <source>
        <tissue>Platelet</tissue>
    </source>
</reference>
<reference key="8">
    <citation type="journal article" date="2009" name="Mol. Cell. Proteomics">
        <title>A strategy for precise and large scale identification of core fucosylated glycoproteins.</title>
        <authorList>
            <person name="Jia W."/>
            <person name="Lu Z."/>
            <person name="Fu Y."/>
            <person name="Wang H.P."/>
            <person name="Wang L.H."/>
            <person name="Chi H."/>
            <person name="Yuan Z.F."/>
            <person name="Zheng Z.B."/>
            <person name="Song L.N."/>
            <person name="Han H.H."/>
            <person name="Liang Y.M."/>
            <person name="Wang J.L."/>
            <person name="Cai Y."/>
            <person name="Zhang Y.K."/>
            <person name="Deng Y.L."/>
            <person name="Ying W.T."/>
            <person name="He S.M."/>
            <person name="Qian X.H."/>
        </authorList>
    </citation>
    <scope>GLYCOSYLATION AT ASN-181 AND ASN-243</scope>
</reference>
<organism>
    <name type="scientific">Homo sapiens</name>
    <name type="common">Human</name>
    <dbReference type="NCBI Taxonomy" id="9606"/>
    <lineage>
        <taxon>Eukaryota</taxon>
        <taxon>Metazoa</taxon>
        <taxon>Chordata</taxon>
        <taxon>Craniata</taxon>
        <taxon>Vertebrata</taxon>
        <taxon>Euteleostomi</taxon>
        <taxon>Mammalia</taxon>
        <taxon>Eutheria</taxon>
        <taxon>Euarchontoglires</taxon>
        <taxon>Primates</taxon>
        <taxon>Haplorrhini</taxon>
        <taxon>Catarrhini</taxon>
        <taxon>Hominidae</taxon>
        <taxon>Homo</taxon>
    </lineage>
</organism>
<sequence length="560" mass="60959">MLRGTLLCAVLGLLRAQPFPCPPACKCVFRDAAQCSGGDVARISALGLPTNLTHILLFGMGRGVLQSQSFSGMTVLQRLMISDSHISAVAPGTFSDLIKLKTLRLSRNKITHLPGALLDKMVLLEQLFLDHNALRGIDQNMFQKLVNLQELALNQNQLDFLPASLFTNLENLKLLDLSGNNLTHLPKGLLGAQAKLERLLLHSNRLVSLDSGLLNSLGALTELQFHRNHIRSIAPGAFDRLPNLSSLTLSRNHLAFLPSALFLHSHNLTLLTLFENPLAELPGVLFGEMGGLQELWLNRTQLRTLPAAAFRNLSRLRYLGVTLSPRLSALPQGAFQGLGELQVLALHSNGLTALPDGLLRGLGKLRQVSLRRNRLRALPRALFRNLSSLESVQLDHNQLETLPGDVFGALPRLTEVLLGHNSWRCDCGLGPFLGWLRQHLGLVGGEEPPRCAGPGAHAGLPLWALPGGDAECPGPRGPPPRPAADSSSEAPVHPALAPNSSEPWVWAQPVTTGKGQDHSPFWGFYFLLLAVQAMITVIIVFAMIKIGQLFRKLIRERALG</sequence>
<evidence type="ECO:0000255" key="1"/>
<evidence type="ECO:0000256" key="2">
    <source>
        <dbReference type="SAM" id="MobiDB-lite"/>
    </source>
</evidence>
<evidence type="ECO:0000269" key="3">
    <source>
    </source>
</evidence>
<evidence type="ECO:0000269" key="4">
    <source>
    </source>
</evidence>
<evidence type="ECO:0000305" key="5"/>
<keyword id="KW-0094">Blood coagulation</keyword>
<keyword id="KW-0130">Cell adhesion</keyword>
<keyword id="KW-0903">Direct protein sequencing</keyword>
<keyword id="KW-0325">Glycoprotein</keyword>
<keyword id="KW-0356">Hemostasis</keyword>
<keyword id="KW-0433">Leucine-rich repeat</keyword>
<keyword id="KW-0472">Membrane</keyword>
<keyword id="KW-1267">Proteomics identification</keyword>
<keyword id="KW-1185">Reference proteome</keyword>
<keyword id="KW-0677">Repeat</keyword>
<keyword id="KW-0732">Signal</keyword>
<keyword id="KW-0812">Transmembrane</keyword>
<keyword id="KW-1133">Transmembrane helix</keyword>
<dbReference type="EMBL" id="L11238">
    <property type="protein sequence ID" value="AAA03069.1"/>
    <property type="molecule type" value="mRNA"/>
</dbReference>
<dbReference type="EMBL" id="Z23091">
    <property type="protein sequence ID" value="CAA80637.1"/>
    <property type="molecule type" value="Genomic_DNA"/>
</dbReference>
<dbReference type="EMBL" id="GU138099">
    <property type="protein sequence ID" value="ACZ44929.1"/>
    <property type="molecule type" value="Genomic_DNA"/>
</dbReference>
<dbReference type="EMBL" id="CH471052">
    <property type="protein sequence ID" value="EAW78053.1"/>
    <property type="molecule type" value="Genomic_DNA"/>
</dbReference>
<dbReference type="CCDS" id="CCDS3307.1"/>
<dbReference type="PIR" id="A48030">
    <property type="entry name" value="A60164"/>
</dbReference>
<dbReference type="RefSeq" id="NP_004479.1">
    <property type="nucleotide sequence ID" value="NM_004488.2"/>
</dbReference>
<dbReference type="SMR" id="P40197"/>
<dbReference type="BioGRID" id="109076">
    <property type="interactions" value="74"/>
</dbReference>
<dbReference type="ComplexPortal" id="CPX-114">
    <property type="entry name" value="Glycoprotein Ib-IX-V complex"/>
</dbReference>
<dbReference type="ComplexPortal" id="CPX-117">
    <property type="entry name" value="Glycoprotein Ib-IX-V-Filamin-A complex"/>
</dbReference>
<dbReference type="CORUM" id="P40197"/>
<dbReference type="FunCoup" id="P40197">
    <property type="interactions" value="191"/>
</dbReference>
<dbReference type="IntAct" id="P40197">
    <property type="interactions" value="58"/>
</dbReference>
<dbReference type="STRING" id="9606.ENSP00000383931"/>
<dbReference type="GlyConnect" id="1968">
    <property type="glycosylation" value="6 N-Linked glycans (2 sites)"/>
</dbReference>
<dbReference type="GlyCosmos" id="P40197">
    <property type="glycosylation" value="8 sites, 6 glycans"/>
</dbReference>
<dbReference type="GlyGen" id="P40197">
    <property type="glycosylation" value="11 sites, 6 N-linked glycans (2 sites)"/>
</dbReference>
<dbReference type="iPTMnet" id="P40197"/>
<dbReference type="PhosphoSitePlus" id="P40197"/>
<dbReference type="BioMuta" id="GP5"/>
<dbReference type="DMDM" id="729616"/>
<dbReference type="jPOST" id="P40197"/>
<dbReference type="MassIVE" id="P40197"/>
<dbReference type="PaxDb" id="9606-ENSP00000383931"/>
<dbReference type="PeptideAtlas" id="P40197"/>
<dbReference type="ProteomicsDB" id="55341"/>
<dbReference type="Antibodypedia" id="56829">
    <property type="antibodies" value="161 antibodies from 20 providers"/>
</dbReference>
<dbReference type="DNASU" id="2814"/>
<dbReference type="Ensembl" id="ENST00000401815.1">
    <property type="protein sequence ID" value="ENSP00000383931.1"/>
    <property type="gene ID" value="ENSG00000178732.6"/>
</dbReference>
<dbReference type="Ensembl" id="ENST00000692618.1">
    <property type="protein sequence ID" value="ENSP00000509337.1"/>
    <property type="gene ID" value="ENSG00000178732.6"/>
</dbReference>
<dbReference type="GeneID" id="2814"/>
<dbReference type="KEGG" id="hsa:2814"/>
<dbReference type="MANE-Select" id="ENST00000692618.1">
    <property type="protein sequence ID" value="ENSP00000509337.1"/>
    <property type="RefSeq nucleotide sequence ID" value="NM_004488.2"/>
    <property type="RefSeq protein sequence ID" value="NP_004479.1"/>
</dbReference>
<dbReference type="UCSC" id="uc062rou.1">
    <property type="organism name" value="human"/>
</dbReference>
<dbReference type="AGR" id="HGNC:4443"/>
<dbReference type="CTD" id="2814"/>
<dbReference type="DisGeNET" id="2814"/>
<dbReference type="GeneCards" id="GP5"/>
<dbReference type="HGNC" id="HGNC:4443">
    <property type="gene designation" value="GP5"/>
</dbReference>
<dbReference type="HPA" id="ENSG00000178732">
    <property type="expression patterns" value="Tissue enhanced (lymphoid)"/>
</dbReference>
<dbReference type="MIM" id="173511">
    <property type="type" value="gene"/>
</dbReference>
<dbReference type="neXtProt" id="NX_P40197"/>
<dbReference type="OpenTargets" id="ENSG00000178732"/>
<dbReference type="PharmGKB" id="PA28823"/>
<dbReference type="VEuPathDB" id="HostDB:ENSG00000178732"/>
<dbReference type="eggNOG" id="KOG0619">
    <property type="taxonomic scope" value="Eukaryota"/>
</dbReference>
<dbReference type="GeneTree" id="ENSGT00940000162953"/>
<dbReference type="HOGENOM" id="CLU_000288_18_6_1"/>
<dbReference type="InParanoid" id="P40197"/>
<dbReference type="OMA" id="HILLFGM"/>
<dbReference type="OrthoDB" id="27267at2759"/>
<dbReference type="PAN-GO" id="P40197">
    <property type="GO annotations" value="2 GO annotations based on evolutionary models"/>
</dbReference>
<dbReference type="PhylomeDB" id="P40197"/>
<dbReference type="TreeFam" id="TF351124"/>
<dbReference type="PathwayCommons" id="P40197"/>
<dbReference type="Reactome" id="R-HSA-140837">
    <property type="pathway name" value="Intrinsic Pathway of Fibrin Clot Formation"/>
</dbReference>
<dbReference type="Reactome" id="R-HSA-430116">
    <property type="pathway name" value="GP1b-IX-V activation signalling"/>
</dbReference>
<dbReference type="Reactome" id="R-HSA-75892">
    <property type="pathway name" value="Platelet Adhesion to exposed collagen"/>
</dbReference>
<dbReference type="Reactome" id="R-HSA-76009">
    <property type="pathway name" value="Platelet Aggregation (Plug Formation)"/>
</dbReference>
<dbReference type="Reactome" id="R-HSA-9673221">
    <property type="pathway name" value="Defective F9 activation"/>
</dbReference>
<dbReference type="Reactome" id="R-HSA-9845620">
    <property type="pathway name" value="Enhanced binding of GP1BA variant to VWF multimer:collagen"/>
</dbReference>
<dbReference type="Reactome" id="R-HSA-9846298">
    <property type="pathway name" value="Defective binding of VWF variant to GPIb:IX:V"/>
</dbReference>
<dbReference type="SignaLink" id="P40197"/>
<dbReference type="SIGNOR" id="P40197"/>
<dbReference type="BioGRID-ORCS" id="2814">
    <property type="hits" value="10 hits in 1148 CRISPR screens"/>
</dbReference>
<dbReference type="GeneWiki" id="GP5"/>
<dbReference type="GenomeRNAi" id="2814"/>
<dbReference type="Pharos" id="P40197">
    <property type="development level" value="Tbio"/>
</dbReference>
<dbReference type="PRO" id="PR:P40197"/>
<dbReference type="Proteomes" id="UP000005640">
    <property type="component" value="Chromosome 3"/>
</dbReference>
<dbReference type="RNAct" id="P40197">
    <property type="molecule type" value="protein"/>
</dbReference>
<dbReference type="Bgee" id="ENSG00000178732">
    <property type="expression patterns" value="Expressed in monocyte and 31 other cell types or tissues"/>
</dbReference>
<dbReference type="GO" id="GO:0070062">
    <property type="term" value="C:extracellular exosome"/>
    <property type="evidence" value="ECO:0007005"/>
    <property type="project" value="UniProtKB"/>
</dbReference>
<dbReference type="GO" id="GO:1990779">
    <property type="term" value="C:glycoprotein Ib-IX-V complex"/>
    <property type="evidence" value="ECO:0000353"/>
    <property type="project" value="ComplexPortal"/>
</dbReference>
<dbReference type="GO" id="GO:0005886">
    <property type="term" value="C:plasma membrane"/>
    <property type="evidence" value="ECO:0000304"/>
    <property type="project" value="Reactome"/>
</dbReference>
<dbReference type="GO" id="GO:0007596">
    <property type="term" value="P:blood coagulation"/>
    <property type="evidence" value="ECO:0000318"/>
    <property type="project" value="GO_Central"/>
</dbReference>
<dbReference type="GO" id="GO:0007597">
    <property type="term" value="P:blood coagulation, intrinsic pathway"/>
    <property type="evidence" value="ECO:0000353"/>
    <property type="project" value="ComplexPortal"/>
</dbReference>
<dbReference type="GO" id="GO:0007155">
    <property type="term" value="P:cell adhesion"/>
    <property type="evidence" value="ECO:0000303"/>
    <property type="project" value="ProtInc"/>
</dbReference>
<dbReference type="GO" id="GO:0035855">
    <property type="term" value="P:megakaryocyte development"/>
    <property type="evidence" value="ECO:0000266"/>
    <property type="project" value="ComplexPortal"/>
</dbReference>
<dbReference type="GO" id="GO:0010572">
    <property type="term" value="P:positive regulation of platelet activation"/>
    <property type="evidence" value="ECO:0000314"/>
    <property type="project" value="ComplexPortal"/>
</dbReference>
<dbReference type="GO" id="GO:0051209">
    <property type="term" value="P:release of sequestered calcium ion into cytosol"/>
    <property type="evidence" value="ECO:0000314"/>
    <property type="project" value="ComplexPortal"/>
</dbReference>
<dbReference type="FunFam" id="3.80.10.10:FF:001455">
    <property type="entry name" value="Glycoprotein V platelet"/>
    <property type="match status" value="1"/>
</dbReference>
<dbReference type="FunFam" id="3.80.10.10:FF:000936">
    <property type="entry name" value="Platelet glycoprotein V"/>
    <property type="match status" value="1"/>
</dbReference>
<dbReference type="Gene3D" id="3.80.10.10">
    <property type="entry name" value="Ribonuclease Inhibitor"/>
    <property type="match status" value="2"/>
</dbReference>
<dbReference type="InterPro" id="IPR000483">
    <property type="entry name" value="Cys-rich_flank_reg_C"/>
</dbReference>
<dbReference type="InterPro" id="IPR001611">
    <property type="entry name" value="Leu-rich_rpt"/>
</dbReference>
<dbReference type="InterPro" id="IPR003591">
    <property type="entry name" value="Leu-rich_rpt_typical-subtyp"/>
</dbReference>
<dbReference type="InterPro" id="IPR050467">
    <property type="entry name" value="LRFN"/>
</dbReference>
<dbReference type="InterPro" id="IPR032675">
    <property type="entry name" value="LRR_dom_sf"/>
</dbReference>
<dbReference type="PANTHER" id="PTHR45842:SF12">
    <property type="entry name" value="KEKKON 5, ISOFORM A"/>
    <property type="match status" value="1"/>
</dbReference>
<dbReference type="PANTHER" id="PTHR45842">
    <property type="entry name" value="SYNAPTIC ADHESION-LIKE MOLECULE SALM"/>
    <property type="match status" value="1"/>
</dbReference>
<dbReference type="Pfam" id="PF13855">
    <property type="entry name" value="LRR_8"/>
    <property type="match status" value="5"/>
</dbReference>
<dbReference type="Pfam" id="PF01463">
    <property type="entry name" value="LRRCT"/>
    <property type="match status" value="1"/>
</dbReference>
<dbReference type="PRINTS" id="PR00019">
    <property type="entry name" value="LEURICHRPT"/>
</dbReference>
<dbReference type="SMART" id="SM00369">
    <property type="entry name" value="LRR_TYP"/>
    <property type="match status" value="14"/>
</dbReference>
<dbReference type="SMART" id="SM00082">
    <property type="entry name" value="LRRCT"/>
    <property type="match status" value="1"/>
</dbReference>
<dbReference type="SUPFAM" id="SSF52058">
    <property type="entry name" value="L domain-like"/>
    <property type="match status" value="2"/>
</dbReference>
<dbReference type="PROSITE" id="PS51450">
    <property type="entry name" value="LRR"/>
    <property type="match status" value="12"/>
</dbReference>
<comment type="function">
    <text>The GPIb-V-IX complex functions as the vWF receptor and mediates vWF-dependent platelet adhesion to blood vessels. The adhesion of platelets to injured vascular surfaces in the arterial circulation is a critical initiating event in hemostasis.</text>
</comment>
<comment type="interaction">
    <interactant intactId="EBI-10891395">
        <id>P40197</id>
    </interactant>
    <interactant intactId="EBI-1754109">
        <id>P14770</id>
        <label>GP9</label>
    </interactant>
    <organismsDiffer>false</organismsDiffer>
    <experiments>2</experiments>
</comment>
<comment type="subcellular location">
    <subcellularLocation>
        <location>Membrane</location>
        <topology>Single-pass type I membrane protein</topology>
    </subcellularLocation>
</comment>
<comment type="tissue specificity">
    <text>Platelets and megakaryocytes.</text>
</comment>
<comment type="PTM">
    <text>The N-terminus is blocked.</text>
</comment>
<proteinExistence type="evidence at protein level"/>